<gene>
    <name evidence="1" type="primary">cheB</name>
    <name type="ordered locus">NE1859</name>
</gene>
<keyword id="KW-0145">Chemotaxis</keyword>
<keyword id="KW-0963">Cytoplasm</keyword>
<keyword id="KW-0378">Hydrolase</keyword>
<keyword id="KW-0597">Phosphoprotein</keyword>
<keyword id="KW-1185">Reference proteome</keyword>
<dbReference type="EC" id="3.1.1.61" evidence="1"/>
<dbReference type="EC" id="3.5.1.44" evidence="1"/>
<dbReference type="EMBL" id="AL954747">
    <property type="protein sequence ID" value="CAD85770.1"/>
    <property type="molecule type" value="Genomic_DNA"/>
</dbReference>
<dbReference type="RefSeq" id="WP_011112397.1">
    <property type="nucleotide sequence ID" value="NC_004757.1"/>
</dbReference>
<dbReference type="SMR" id="Q820K0"/>
<dbReference type="STRING" id="228410.NE1859"/>
<dbReference type="GeneID" id="87105018"/>
<dbReference type="KEGG" id="neu:NE1859"/>
<dbReference type="eggNOG" id="COG2201">
    <property type="taxonomic scope" value="Bacteria"/>
</dbReference>
<dbReference type="HOGENOM" id="CLU_000445_51_0_4"/>
<dbReference type="OrthoDB" id="9793421at2"/>
<dbReference type="PhylomeDB" id="Q820K0"/>
<dbReference type="Proteomes" id="UP000001416">
    <property type="component" value="Chromosome"/>
</dbReference>
<dbReference type="GO" id="GO:0005737">
    <property type="term" value="C:cytoplasm"/>
    <property type="evidence" value="ECO:0007669"/>
    <property type="project" value="UniProtKB-SubCell"/>
</dbReference>
<dbReference type="GO" id="GO:0000156">
    <property type="term" value="F:phosphorelay response regulator activity"/>
    <property type="evidence" value="ECO:0007669"/>
    <property type="project" value="InterPro"/>
</dbReference>
<dbReference type="GO" id="GO:0008984">
    <property type="term" value="F:protein-glutamate methylesterase activity"/>
    <property type="evidence" value="ECO:0007669"/>
    <property type="project" value="UniProtKB-UniRule"/>
</dbReference>
<dbReference type="GO" id="GO:0050568">
    <property type="term" value="F:protein-glutamine glutaminase activity"/>
    <property type="evidence" value="ECO:0007669"/>
    <property type="project" value="UniProtKB-UniRule"/>
</dbReference>
<dbReference type="GO" id="GO:0006935">
    <property type="term" value="P:chemotaxis"/>
    <property type="evidence" value="ECO:0007669"/>
    <property type="project" value="UniProtKB-UniRule"/>
</dbReference>
<dbReference type="CDD" id="cd16432">
    <property type="entry name" value="CheB_Rec"/>
    <property type="match status" value="1"/>
</dbReference>
<dbReference type="CDD" id="cd17541">
    <property type="entry name" value="REC_CheB-like"/>
    <property type="match status" value="1"/>
</dbReference>
<dbReference type="FunFam" id="3.40.50.2300:FF:000060">
    <property type="entry name" value="Protein-glutamate methylesterase/protein-glutamine glutaminase"/>
    <property type="match status" value="1"/>
</dbReference>
<dbReference type="Gene3D" id="3.40.50.2300">
    <property type="match status" value="1"/>
</dbReference>
<dbReference type="Gene3D" id="3.40.50.180">
    <property type="entry name" value="Methylesterase CheB, C-terminal domain"/>
    <property type="match status" value="1"/>
</dbReference>
<dbReference type="HAMAP" id="MF_00099">
    <property type="entry name" value="CheB_chemtxs"/>
    <property type="match status" value="1"/>
</dbReference>
<dbReference type="InterPro" id="IPR008248">
    <property type="entry name" value="CheB-like"/>
</dbReference>
<dbReference type="InterPro" id="IPR035909">
    <property type="entry name" value="CheB_C"/>
</dbReference>
<dbReference type="InterPro" id="IPR011006">
    <property type="entry name" value="CheY-like_superfamily"/>
</dbReference>
<dbReference type="InterPro" id="IPR000673">
    <property type="entry name" value="Sig_transdc_resp-reg_Me-estase"/>
</dbReference>
<dbReference type="InterPro" id="IPR001789">
    <property type="entry name" value="Sig_transdc_resp-reg_receiver"/>
</dbReference>
<dbReference type="NCBIfam" id="NF001965">
    <property type="entry name" value="PRK00742.1"/>
    <property type="match status" value="1"/>
</dbReference>
<dbReference type="NCBIfam" id="NF009206">
    <property type="entry name" value="PRK12555.1"/>
    <property type="match status" value="1"/>
</dbReference>
<dbReference type="PANTHER" id="PTHR42872">
    <property type="entry name" value="PROTEIN-GLUTAMATE METHYLESTERASE/PROTEIN-GLUTAMINE GLUTAMINASE"/>
    <property type="match status" value="1"/>
</dbReference>
<dbReference type="PANTHER" id="PTHR42872:SF6">
    <property type="entry name" value="PROTEIN-GLUTAMATE METHYLESTERASE_PROTEIN-GLUTAMINE GLUTAMINASE"/>
    <property type="match status" value="1"/>
</dbReference>
<dbReference type="Pfam" id="PF01339">
    <property type="entry name" value="CheB_methylest"/>
    <property type="match status" value="1"/>
</dbReference>
<dbReference type="Pfam" id="PF00072">
    <property type="entry name" value="Response_reg"/>
    <property type="match status" value="1"/>
</dbReference>
<dbReference type="PIRSF" id="PIRSF000876">
    <property type="entry name" value="RR_chemtxs_CheB"/>
    <property type="match status" value="1"/>
</dbReference>
<dbReference type="SMART" id="SM00448">
    <property type="entry name" value="REC"/>
    <property type="match status" value="1"/>
</dbReference>
<dbReference type="SUPFAM" id="SSF52172">
    <property type="entry name" value="CheY-like"/>
    <property type="match status" value="1"/>
</dbReference>
<dbReference type="SUPFAM" id="SSF52738">
    <property type="entry name" value="Methylesterase CheB, C-terminal domain"/>
    <property type="match status" value="1"/>
</dbReference>
<dbReference type="PROSITE" id="PS50122">
    <property type="entry name" value="CHEB"/>
    <property type="match status" value="1"/>
</dbReference>
<dbReference type="PROSITE" id="PS50110">
    <property type="entry name" value="RESPONSE_REGULATORY"/>
    <property type="match status" value="1"/>
</dbReference>
<organism>
    <name type="scientific">Nitrosomonas europaea (strain ATCC 19718 / CIP 103999 / KCTC 2705 / NBRC 14298)</name>
    <dbReference type="NCBI Taxonomy" id="228410"/>
    <lineage>
        <taxon>Bacteria</taxon>
        <taxon>Pseudomonadati</taxon>
        <taxon>Pseudomonadota</taxon>
        <taxon>Betaproteobacteria</taxon>
        <taxon>Nitrosomonadales</taxon>
        <taxon>Nitrosomonadaceae</taxon>
        <taxon>Nitrosomonas</taxon>
    </lineage>
</organism>
<accession>Q820K0</accession>
<evidence type="ECO:0000255" key="1">
    <source>
        <dbReference type="HAMAP-Rule" id="MF_00099"/>
    </source>
</evidence>
<name>CHEB_NITEU</name>
<proteinExistence type="inferred from homology"/>
<protein>
    <recommendedName>
        <fullName evidence="1">Protein-glutamate methylesterase/protein-glutamine glutaminase</fullName>
        <ecNumber evidence="1">3.1.1.61</ecNumber>
        <ecNumber evidence="1">3.5.1.44</ecNumber>
    </recommendedName>
</protein>
<sequence>MKKISVLIIDDSALIRKLLTEIINARPDMEVIGAAPDPIVAREMIRTLNPDVLTLDVEMPKMDGLEFLEKLMRLRPMPVVMVSTLTERGSEVTFRALELGAVDFVAKPKMDIRNSLEAYTDEITGKIRTASTARIHRLEPVASNGAASGSIVQMPRHHGISTEKLIIIGASTGGTEAIKDVLIHLPPDCPGILITQHMPEGFTRSFAERLDRLCKIRVKEAEGGERVLPGHAYLAPGHSHLLLKKSGANYVTELSQTDPVNRHRPSVDVLFQSAAHCAGKNAVGVILTGMGKDGAAGMLDMHHAGAYNLAQDETSCVVFGMPKEAITLGAVDEIVPLQDMARRILARLVGAGKQAVRV</sequence>
<feature type="chain" id="PRO_0000158005" description="Protein-glutamate methylesterase/protein-glutamine glutaminase">
    <location>
        <begin position="1"/>
        <end position="358"/>
    </location>
</feature>
<feature type="domain" description="Response regulatory" evidence="1">
    <location>
        <begin position="5"/>
        <end position="122"/>
    </location>
</feature>
<feature type="domain" description="CheB-type methylesterase" evidence="1">
    <location>
        <begin position="159"/>
        <end position="351"/>
    </location>
</feature>
<feature type="active site" evidence="1">
    <location>
        <position position="171"/>
    </location>
</feature>
<feature type="active site" evidence="1">
    <location>
        <position position="197"/>
    </location>
</feature>
<feature type="active site" evidence="1">
    <location>
        <position position="293"/>
    </location>
</feature>
<feature type="modified residue" description="4-aspartylphosphate" evidence="1">
    <location>
        <position position="56"/>
    </location>
</feature>
<reference key="1">
    <citation type="journal article" date="2003" name="J. Bacteriol.">
        <title>Complete genome sequence of the ammonia-oxidizing bacterium and obligate chemolithoautotroph Nitrosomonas europaea.</title>
        <authorList>
            <person name="Chain P."/>
            <person name="Lamerdin J.E."/>
            <person name="Larimer F.W."/>
            <person name="Regala W."/>
            <person name="Lao V."/>
            <person name="Land M.L."/>
            <person name="Hauser L."/>
            <person name="Hooper A.B."/>
            <person name="Klotz M.G."/>
            <person name="Norton J."/>
            <person name="Sayavedra-Soto L.A."/>
            <person name="Arciero D.M."/>
            <person name="Hommes N.G."/>
            <person name="Whittaker M.M."/>
            <person name="Arp D.J."/>
        </authorList>
    </citation>
    <scope>NUCLEOTIDE SEQUENCE [LARGE SCALE GENOMIC DNA]</scope>
    <source>
        <strain>ATCC 19718 / CIP 103999 / KCTC 2705 / NBRC 14298</strain>
    </source>
</reference>
<comment type="function">
    <text evidence="1">Involved in chemotaxis. Part of a chemotaxis signal transduction system that modulates chemotaxis in response to various stimuli. Catalyzes the demethylation of specific methylglutamate residues introduced into the chemoreceptors (methyl-accepting chemotaxis proteins or MCP) by CheR. Also mediates the irreversible deamidation of specific glutamine residues to glutamic acid.</text>
</comment>
<comment type="catalytic activity">
    <reaction evidence="1">
        <text>[protein]-L-glutamate 5-O-methyl ester + H2O = L-glutamyl-[protein] + methanol + H(+)</text>
        <dbReference type="Rhea" id="RHEA:23236"/>
        <dbReference type="Rhea" id="RHEA-COMP:10208"/>
        <dbReference type="Rhea" id="RHEA-COMP:10311"/>
        <dbReference type="ChEBI" id="CHEBI:15377"/>
        <dbReference type="ChEBI" id="CHEBI:15378"/>
        <dbReference type="ChEBI" id="CHEBI:17790"/>
        <dbReference type="ChEBI" id="CHEBI:29973"/>
        <dbReference type="ChEBI" id="CHEBI:82795"/>
        <dbReference type="EC" id="3.1.1.61"/>
    </reaction>
</comment>
<comment type="catalytic activity">
    <reaction evidence="1">
        <text>L-glutaminyl-[protein] + H2O = L-glutamyl-[protein] + NH4(+)</text>
        <dbReference type="Rhea" id="RHEA:16441"/>
        <dbReference type="Rhea" id="RHEA-COMP:10207"/>
        <dbReference type="Rhea" id="RHEA-COMP:10208"/>
        <dbReference type="ChEBI" id="CHEBI:15377"/>
        <dbReference type="ChEBI" id="CHEBI:28938"/>
        <dbReference type="ChEBI" id="CHEBI:29973"/>
        <dbReference type="ChEBI" id="CHEBI:30011"/>
        <dbReference type="EC" id="3.5.1.44"/>
    </reaction>
</comment>
<comment type="subcellular location">
    <subcellularLocation>
        <location evidence="1">Cytoplasm</location>
    </subcellularLocation>
</comment>
<comment type="domain">
    <text evidence="1">Contains a C-terminal catalytic domain, and an N-terminal region which modulates catalytic activity.</text>
</comment>
<comment type="PTM">
    <text evidence="1">Phosphorylated by CheA. Phosphorylation of the N-terminal regulatory domain activates the methylesterase activity.</text>
</comment>
<comment type="similarity">
    <text evidence="1">Belongs to the CheB family.</text>
</comment>